<organism>
    <name type="scientific">Grammistes sexlineatus</name>
    <name type="common">Goldenstriped soapfish</name>
    <name type="synonym">Perca sexlineata</name>
    <dbReference type="NCBI Taxonomy" id="270576"/>
    <lineage>
        <taxon>Eukaryota</taxon>
        <taxon>Metazoa</taxon>
        <taxon>Chordata</taxon>
        <taxon>Craniata</taxon>
        <taxon>Vertebrata</taxon>
        <taxon>Euteleostomi</taxon>
        <taxon>Actinopterygii</taxon>
        <taxon>Neopterygii</taxon>
        <taxon>Teleostei</taxon>
        <taxon>Neoteleostei</taxon>
        <taxon>Acanthomorphata</taxon>
        <taxon>Eupercaria</taxon>
        <taxon>Perciformes</taxon>
        <taxon>Serranoidei</taxon>
        <taxon>Serranidae</taxon>
        <taxon>Epinephelinae</taxon>
        <taxon>Grammistini</taxon>
        <taxon>Grammistes</taxon>
    </lineage>
</organism>
<dbReference type="GO" id="GO:0005576">
    <property type="term" value="C:extracellular region"/>
    <property type="evidence" value="ECO:0007669"/>
    <property type="project" value="UniProtKB-SubCell"/>
</dbReference>
<dbReference type="GO" id="GO:0042742">
    <property type="term" value="P:defense response to bacterium"/>
    <property type="evidence" value="ECO:0007669"/>
    <property type="project" value="UniProtKB-KW"/>
</dbReference>
<dbReference type="GO" id="GO:0031640">
    <property type="term" value="P:killing of cells of another organism"/>
    <property type="evidence" value="ECO:0007669"/>
    <property type="project" value="UniProtKB-KW"/>
</dbReference>
<accession>P69845</accession>
<keyword id="KW-0044">Antibiotic</keyword>
<keyword id="KW-0929">Antimicrobial</keyword>
<keyword id="KW-0204">Cytolysis</keyword>
<keyword id="KW-0903">Direct protein sequencing</keyword>
<keyword id="KW-0964">Secreted</keyword>
<comment type="function">
    <text>Thanks to its amphiphilic alpha-helice(s), it may integrate into membrane phospholipids, leading to lysis of the membrane. Has no substantial hemolytic activity. Has antibacterial activity with a broad spectrum against various species of bacteria including both Gram-positive and Gram-negative groups.</text>
</comment>
<comment type="subunit">
    <text evidence="1">Exists as aggregates of 3-4 molecules.</text>
</comment>
<comment type="subcellular location">
    <subcellularLocation>
        <location>Secreted</location>
    </subcellularLocation>
</comment>
<comment type="tissue specificity">
    <text>Expressed by the skin glands.</text>
</comment>
<comment type="similarity">
    <text evidence="1">Belongs to the grammistin family. Group 3 subfamily.</text>
</comment>
<proteinExistence type="evidence at protein level"/>
<reference key="1">
    <citation type="journal article" date="2005" name="Toxicon">
        <title>Further isolation and characterization of grammistins from the skin secretion of the soapfish Grammistes sexlineatus.</title>
        <authorList>
            <person name="Sugiyama N."/>
            <person name="Araki M."/>
            <person name="Ishida M."/>
            <person name="Nagashima Y."/>
            <person name="Shiomi K."/>
        </authorList>
    </citation>
    <scope>PROTEIN SEQUENCE</scope>
    <source>
        <tissue>Skin secretion</tissue>
    </source>
</reference>
<sequence>WWRELLKKLAFTAAGHLGSVLAAKQSGW</sequence>
<protein>
    <recommendedName>
        <fullName>Grammistin Gs A</fullName>
    </recommendedName>
</protein>
<evidence type="ECO:0000305" key="1"/>
<name>GRAA_GRASX</name>
<feature type="peptide" id="PRO_0000044528" description="Grammistin Gs A">
    <location>
        <begin position="1"/>
        <end position="28"/>
    </location>
</feature>